<proteinExistence type="inferred from homology"/>
<reference key="1">
    <citation type="journal article" date="2004" name="Nucleic Acids Res.">
        <title>Thermoadaptation trait revealed by the genome sequence of thermophilic Geobacillus kaustophilus.</title>
        <authorList>
            <person name="Takami H."/>
            <person name="Takaki Y."/>
            <person name="Chee G.-J."/>
            <person name="Nishi S."/>
            <person name="Shimamura S."/>
            <person name="Suzuki H."/>
            <person name="Matsui S."/>
            <person name="Uchiyama I."/>
        </authorList>
    </citation>
    <scope>NUCLEOTIDE SEQUENCE [LARGE SCALE GENOMIC DNA]</scope>
    <source>
        <strain>HTA426</strain>
    </source>
</reference>
<feature type="chain" id="PRO_0000177675" description="Peptide chain release factor 1">
    <location>
        <begin position="1"/>
        <end position="358"/>
    </location>
</feature>
<feature type="modified residue" description="N5-methylglutamine" evidence="1">
    <location>
        <position position="233"/>
    </location>
</feature>
<dbReference type="EMBL" id="BA000043">
    <property type="protein sequence ID" value="BAD77663.1"/>
    <property type="molecule type" value="Genomic_DNA"/>
</dbReference>
<dbReference type="RefSeq" id="WP_011232845.1">
    <property type="nucleotide sequence ID" value="NC_006510.1"/>
</dbReference>
<dbReference type="SMR" id="Q5KUH3"/>
<dbReference type="STRING" id="235909.GK3378"/>
<dbReference type="GeneID" id="32065262"/>
<dbReference type="KEGG" id="gka:GK3378"/>
<dbReference type="eggNOG" id="COG0216">
    <property type="taxonomic scope" value="Bacteria"/>
</dbReference>
<dbReference type="HOGENOM" id="CLU_036856_0_1_9"/>
<dbReference type="Proteomes" id="UP000001172">
    <property type="component" value="Chromosome"/>
</dbReference>
<dbReference type="GO" id="GO:0005737">
    <property type="term" value="C:cytoplasm"/>
    <property type="evidence" value="ECO:0007669"/>
    <property type="project" value="UniProtKB-SubCell"/>
</dbReference>
<dbReference type="GO" id="GO:0016149">
    <property type="term" value="F:translation release factor activity, codon specific"/>
    <property type="evidence" value="ECO:0007669"/>
    <property type="project" value="UniProtKB-UniRule"/>
</dbReference>
<dbReference type="FunFam" id="3.30.160.20:FF:000004">
    <property type="entry name" value="Peptide chain release factor 1"/>
    <property type="match status" value="1"/>
</dbReference>
<dbReference type="FunFam" id="3.30.70.1660:FF:000002">
    <property type="entry name" value="Peptide chain release factor 1"/>
    <property type="match status" value="1"/>
</dbReference>
<dbReference type="FunFam" id="3.30.70.1660:FF:000004">
    <property type="entry name" value="Peptide chain release factor 1"/>
    <property type="match status" value="1"/>
</dbReference>
<dbReference type="Gene3D" id="3.30.160.20">
    <property type="match status" value="1"/>
</dbReference>
<dbReference type="Gene3D" id="3.30.70.1660">
    <property type="match status" value="1"/>
</dbReference>
<dbReference type="Gene3D" id="6.10.140.1950">
    <property type="match status" value="1"/>
</dbReference>
<dbReference type="HAMAP" id="MF_00093">
    <property type="entry name" value="Rel_fac_1"/>
    <property type="match status" value="1"/>
</dbReference>
<dbReference type="InterPro" id="IPR005139">
    <property type="entry name" value="PCRF"/>
</dbReference>
<dbReference type="InterPro" id="IPR000352">
    <property type="entry name" value="Pep_chain_release_fac_I"/>
</dbReference>
<dbReference type="InterPro" id="IPR045853">
    <property type="entry name" value="Pep_chain_release_fac_I_sf"/>
</dbReference>
<dbReference type="InterPro" id="IPR050057">
    <property type="entry name" value="Prokaryotic/Mito_RF"/>
</dbReference>
<dbReference type="InterPro" id="IPR004373">
    <property type="entry name" value="RF-1"/>
</dbReference>
<dbReference type="NCBIfam" id="TIGR00019">
    <property type="entry name" value="prfA"/>
    <property type="match status" value="1"/>
</dbReference>
<dbReference type="NCBIfam" id="NF001859">
    <property type="entry name" value="PRK00591.1"/>
    <property type="match status" value="1"/>
</dbReference>
<dbReference type="PANTHER" id="PTHR43804">
    <property type="entry name" value="LD18447P"/>
    <property type="match status" value="1"/>
</dbReference>
<dbReference type="PANTHER" id="PTHR43804:SF7">
    <property type="entry name" value="LD18447P"/>
    <property type="match status" value="1"/>
</dbReference>
<dbReference type="Pfam" id="PF03462">
    <property type="entry name" value="PCRF"/>
    <property type="match status" value="1"/>
</dbReference>
<dbReference type="Pfam" id="PF00472">
    <property type="entry name" value="RF-1"/>
    <property type="match status" value="1"/>
</dbReference>
<dbReference type="SMART" id="SM00937">
    <property type="entry name" value="PCRF"/>
    <property type="match status" value="1"/>
</dbReference>
<dbReference type="SUPFAM" id="SSF75620">
    <property type="entry name" value="Release factor"/>
    <property type="match status" value="1"/>
</dbReference>
<dbReference type="PROSITE" id="PS00745">
    <property type="entry name" value="RF_PROK_I"/>
    <property type="match status" value="1"/>
</dbReference>
<sequence length="358" mass="40789">MFDRLEAVEQRYEKLNELLMDPDVINDPKKLRDYSKEQADLEETVQTYREYKSVREQLAEAKAMLEEKLEPELREMVKEEIGELEEREEALVEKLKVLLLPKDPNDEKNVIMEIRAAAGGEEAALFAGDLYRMYTRYAESQGWKTEVIEASPTGLGGYKEIIFMINGKGAYSKLKFENGAHRVQRVPETESGGRIHTSTATVACLPEMEEIEVEINEKDIRVDTFASSGPGGQSVNTTMSAVRLTHIPTGIVVTCQDEKSQIKNKEKAMKVLRARIYDKYQQEARAEYDQTRKQAVGTGDRSERIRTYNFPQNRVTDHRIGLTIQKLDQVLDGHLDEIIEALILDDQAKKLEQANDAS</sequence>
<gene>
    <name evidence="1" type="primary">prfA</name>
    <name type="ordered locus">GK3378</name>
</gene>
<keyword id="KW-0963">Cytoplasm</keyword>
<keyword id="KW-0488">Methylation</keyword>
<keyword id="KW-0648">Protein biosynthesis</keyword>
<keyword id="KW-1185">Reference proteome</keyword>
<comment type="function">
    <text evidence="1">Peptide chain release factor 1 directs the termination of translation in response to the peptide chain termination codons UAG and UAA.</text>
</comment>
<comment type="subcellular location">
    <subcellularLocation>
        <location evidence="1">Cytoplasm</location>
    </subcellularLocation>
</comment>
<comment type="PTM">
    <text evidence="1">Methylated by PrmC. Methylation increases the termination efficiency of RF1.</text>
</comment>
<comment type="similarity">
    <text evidence="1">Belongs to the prokaryotic/mitochondrial release factor family.</text>
</comment>
<organism>
    <name type="scientific">Geobacillus kaustophilus (strain HTA426)</name>
    <dbReference type="NCBI Taxonomy" id="235909"/>
    <lineage>
        <taxon>Bacteria</taxon>
        <taxon>Bacillati</taxon>
        <taxon>Bacillota</taxon>
        <taxon>Bacilli</taxon>
        <taxon>Bacillales</taxon>
        <taxon>Anoxybacillaceae</taxon>
        <taxon>Geobacillus</taxon>
        <taxon>Geobacillus thermoleovorans group</taxon>
    </lineage>
</organism>
<accession>Q5KUH3</accession>
<evidence type="ECO:0000255" key="1">
    <source>
        <dbReference type="HAMAP-Rule" id="MF_00093"/>
    </source>
</evidence>
<protein>
    <recommendedName>
        <fullName evidence="1">Peptide chain release factor 1</fullName>
        <shortName evidence="1">RF-1</shortName>
    </recommendedName>
</protein>
<name>RF1_GEOKA</name>